<proteinExistence type="inferred from homology"/>
<evidence type="ECO:0000255" key="1">
    <source>
        <dbReference type="HAMAP-Rule" id="MF_01864"/>
    </source>
</evidence>
<evidence type="ECO:0000255" key="2">
    <source>
        <dbReference type="PROSITE-ProRule" id="PRU01266"/>
    </source>
</evidence>
<dbReference type="EC" id="2.8.4.3" evidence="1"/>
<dbReference type="EMBL" id="CP000252">
    <property type="protein sequence ID" value="ABC77300.1"/>
    <property type="molecule type" value="Genomic_DNA"/>
</dbReference>
<dbReference type="RefSeq" id="WP_011417322.1">
    <property type="nucleotide sequence ID" value="NC_007759.1"/>
</dbReference>
<dbReference type="SMR" id="Q2LT94"/>
<dbReference type="FunCoup" id="Q2LT94">
    <property type="interactions" value="489"/>
</dbReference>
<dbReference type="STRING" id="56780.SYN_02149"/>
<dbReference type="KEGG" id="sat:SYN_02149"/>
<dbReference type="eggNOG" id="COG0621">
    <property type="taxonomic scope" value="Bacteria"/>
</dbReference>
<dbReference type="HOGENOM" id="CLU_018697_2_0_7"/>
<dbReference type="InParanoid" id="Q2LT94"/>
<dbReference type="OrthoDB" id="9805215at2"/>
<dbReference type="Proteomes" id="UP000001933">
    <property type="component" value="Chromosome"/>
</dbReference>
<dbReference type="GO" id="GO:0005829">
    <property type="term" value="C:cytosol"/>
    <property type="evidence" value="ECO:0007669"/>
    <property type="project" value="TreeGrafter"/>
</dbReference>
<dbReference type="GO" id="GO:0051539">
    <property type="term" value="F:4 iron, 4 sulfur cluster binding"/>
    <property type="evidence" value="ECO:0007669"/>
    <property type="project" value="UniProtKB-UniRule"/>
</dbReference>
<dbReference type="GO" id="GO:0046872">
    <property type="term" value="F:metal ion binding"/>
    <property type="evidence" value="ECO:0007669"/>
    <property type="project" value="UniProtKB-KW"/>
</dbReference>
<dbReference type="GO" id="GO:0035597">
    <property type="term" value="F:N6-isopentenyladenosine methylthiotransferase activity"/>
    <property type="evidence" value="ECO:0007669"/>
    <property type="project" value="TreeGrafter"/>
</dbReference>
<dbReference type="CDD" id="cd01335">
    <property type="entry name" value="Radical_SAM"/>
    <property type="match status" value="1"/>
</dbReference>
<dbReference type="FunFam" id="3.40.50.12160:FF:000003">
    <property type="entry name" value="CDK5 regulatory subunit-associated protein 1"/>
    <property type="match status" value="1"/>
</dbReference>
<dbReference type="FunFam" id="3.80.30.20:FF:000001">
    <property type="entry name" value="tRNA-2-methylthio-N(6)-dimethylallyladenosine synthase 2"/>
    <property type="match status" value="1"/>
</dbReference>
<dbReference type="Gene3D" id="3.40.50.12160">
    <property type="entry name" value="Methylthiotransferase, N-terminal domain"/>
    <property type="match status" value="1"/>
</dbReference>
<dbReference type="Gene3D" id="3.80.30.20">
    <property type="entry name" value="tm_1862 like domain"/>
    <property type="match status" value="1"/>
</dbReference>
<dbReference type="HAMAP" id="MF_01864">
    <property type="entry name" value="tRNA_metthiotr_MiaB"/>
    <property type="match status" value="1"/>
</dbReference>
<dbReference type="InterPro" id="IPR006638">
    <property type="entry name" value="Elp3/MiaA/NifB-like_rSAM"/>
</dbReference>
<dbReference type="InterPro" id="IPR005839">
    <property type="entry name" value="Methylthiotransferase"/>
</dbReference>
<dbReference type="InterPro" id="IPR020612">
    <property type="entry name" value="Methylthiotransferase_CS"/>
</dbReference>
<dbReference type="InterPro" id="IPR013848">
    <property type="entry name" value="Methylthiotransferase_N"/>
</dbReference>
<dbReference type="InterPro" id="IPR038135">
    <property type="entry name" value="Methylthiotransferase_N_sf"/>
</dbReference>
<dbReference type="InterPro" id="IPR006463">
    <property type="entry name" value="MiaB_methiolase"/>
</dbReference>
<dbReference type="InterPro" id="IPR007197">
    <property type="entry name" value="rSAM"/>
</dbReference>
<dbReference type="InterPro" id="IPR023404">
    <property type="entry name" value="rSAM_horseshoe"/>
</dbReference>
<dbReference type="InterPro" id="IPR002792">
    <property type="entry name" value="TRAM_dom"/>
</dbReference>
<dbReference type="NCBIfam" id="TIGR01574">
    <property type="entry name" value="miaB-methiolase"/>
    <property type="match status" value="1"/>
</dbReference>
<dbReference type="NCBIfam" id="TIGR00089">
    <property type="entry name" value="MiaB/RimO family radical SAM methylthiotransferase"/>
    <property type="match status" value="1"/>
</dbReference>
<dbReference type="PANTHER" id="PTHR43020">
    <property type="entry name" value="CDK5 REGULATORY SUBUNIT-ASSOCIATED PROTEIN 1"/>
    <property type="match status" value="1"/>
</dbReference>
<dbReference type="PANTHER" id="PTHR43020:SF2">
    <property type="entry name" value="MITOCHONDRIAL TRNA METHYLTHIOTRANSFERASE CDK5RAP1"/>
    <property type="match status" value="1"/>
</dbReference>
<dbReference type="Pfam" id="PF04055">
    <property type="entry name" value="Radical_SAM"/>
    <property type="match status" value="1"/>
</dbReference>
<dbReference type="Pfam" id="PF01938">
    <property type="entry name" value="TRAM"/>
    <property type="match status" value="1"/>
</dbReference>
<dbReference type="Pfam" id="PF00919">
    <property type="entry name" value="UPF0004"/>
    <property type="match status" value="1"/>
</dbReference>
<dbReference type="SFLD" id="SFLDF00273">
    <property type="entry name" value="(dimethylallyl)adenosine_tRNA"/>
    <property type="match status" value="1"/>
</dbReference>
<dbReference type="SFLD" id="SFLDG01082">
    <property type="entry name" value="B12-binding_domain_containing"/>
    <property type="match status" value="1"/>
</dbReference>
<dbReference type="SFLD" id="SFLDG01061">
    <property type="entry name" value="methylthiotransferase"/>
    <property type="match status" value="1"/>
</dbReference>
<dbReference type="SMART" id="SM00729">
    <property type="entry name" value="Elp3"/>
    <property type="match status" value="1"/>
</dbReference>
<dbReference type="SUPFAM" id="SSF102114">
    <property type="entry name" value="Radical SAM enzymes"/>
    <property type="match status" value="1"/>
</dbReference>
<dbReference type="PROSITE" id="PS51449">
    <property type="entry name" value="MTTASE_N"/>
    <property type="match status" value="1"/>
</dbReference>
<dbReference type="PROSITE" id="PS01278">
    <property type="entry name" value="MTTASE_RADICAL"/>
    <property type="match status" value="1"/>
</dbReference>
<dbReference type="PROSITE" id="PS51918">
    <property type="entry name" value="RADICAL_SAM"/>
    <property type="match status" value="1"/>
</dbReference>
<dbReference type="PROSITE" id="PS50926">
    <property type="entry name" value="TRAM"/>
    <property type="match status" value="1"/>
</dbReference>
<keyword id="KW-0004">4Fe-4S</keyword>
<keyword id="KW-0963">Cytoplasm</keyword>
<keyword id="KW-0408">Iron</keyword>
<keyword id="KW-0411">Iron-sulfur</keyword>
<keyword id="KW-0479">Metal-binding</keyword>
<keyword id="KW-1185">Reference proteome</keyword>
<keyword id="KW-0949">S-adenosyl-L-methionine</keyword>
<keyword id="KW-0808">Transferase</keyword>
<keyword id="KW-0819">tRNA processing</keyword>
<name>MIAB_SYNAS</name>
<gene>
    <name evidence="1" type="primary">miaB</name>
    <name type="ordered locus">SYNAS_14210</name>
    <name type="ORF">SYN_02149</name>
</gene>
<feature type="chain" id="PRO_0000374605" description="tRNA-2-methylthio-N(6)-dimethylallyladenosine synthase">
    <location>
        <begin position="1"/>
        <end position="461"/>
    </location>
</feature>
<feature type="domain" description="MTTase N-terminal" evidence="1">
    <location>
        <begin position="18"/>
        <end position="134"/>
    </location>
</feature>
<feature type="domain" description="Radical SAM core" evidence="2">
    <location>
        <begin position="158"/>
        <end position="388"/>
    </location>
</feature>
<feature type="domain" description="TRAM" evidence="1">
    <location>
        <begin position="391"/>
        <end position="454"/>
    </location>
</feature>
<feature type="binding site" evidence="1">
    <location>
        <position position="27"/>
    </location>
    <ligand>
        <name>[4Fe-4S] cluster</name>
        <dbReference type="ChEBI" id="CHEBI:49883"/>
        <label>1</label>
    </ligand>
</feature>
<feature type="binding site" evidence="1">
    <location>
        <position position="63"/>
    </location>
    <ligand>
        <name>[4Fe-4S] cluster</name>
        <dbReference type="ChEBI" id="CHEBI:49883"/>
        <label>1</label>
    </ligand>
</feature>
<feature type="binding site" evidence="1">
    <location>
        <position position="97"/>
    </location>
    <ligand>
        <name>[4Fe-4S] cluster</name>
        <dbReference type="ChEBI" id="CHEBI:49883"/>
        <label>1</label>
    </ligand>
</feature>
<feature type="binding site" evidence="1">
    <location>
        <position position="172"/>
    </location>
    <ligand>
        <name>[4Fe-4S] cluster</name>
        <dbReference type="ChEBI" id="CHEBI:49883"/>
        <label>2</label>
        <note>4Fe-4S-S-AdoMet</note>
    </ligand>
</feature>
<feature type="binding site" evidence="1">
    <location>
        <position position="176"/>
    </location>
    <ligand>
        <name>[4Fe-4S] cluster</name>
        <dbReference type="ChEBI" id="CHEBI:49883"/>
        <label>2</label>
        <note>4Fe-4S-S-AdoMet</note>
    </ligand>
</feature>
<feature type="binding site" evidence="1">
    <location>
        <position position="179"/>
    </location>
    <ligand>
        <name>[4Fe-4S] cluster</name>
        <dbReference type="ChEBI" id="CHEBI:49883"/>
        <label>2</label>
        <note>4Fe-4S-S-AdoMet</note>
    </ligand>
</feature>
<organism>
    <name type="scientific">Syntrophus aciditrophicus (strain SB)</name>
    <dbReference type="NCBI Taxonomy" id="56780"/>
    <lineage>
        <taxon>Bacteria</taxon>
        <taxon>Pseudomonadati</taxon>
        <taxon>Thermodesulfobacteriota</taxon>
        <taxon>Syntrophia</taxon>
        <taxon>Syntrophales</taxon>
        <taxon>Syntrophaceae</taxon>
        <taxon>Syntrophus</taxon>
    </lineage>
</organism>
<reference key="1">
    <citation type="journal article" date="2007" name="Proc. Natl. Acad. Sci. U.S.A.">
        <title>The genome of Syntrophus aciditrophicus: life at the thermodynamic limit of microbial growth.</title>
        <authorList>
            <person name="McInerney M.J."/>
            <person name="Rohlin L."/>
            <person name="Mouttaki H."/>
            <person name="Kim U."/>
            <person name="Krupp R.S."/>
            <person name="Rios-Hernandez L."/>
            <person name="Sieber J."/>
            <person name="Struchtemeyer C.G."/>
            <person name="Bhattacharyya A."/>
            <person name="Campbell J.W."/>
            <person name="Gunsalus R.P."/>
        </authorList>
    </citation>
    <scope>NUCLEOTIDE SEQUENCE [LARGE SCALE GENOMIC DNA]</scope>
    <source>
        <strain>SB</strain>
    </source>
</reference>
<accession>Q2LT94</accession>
<comment type="function">
    <text evidence="1">Catalyzes the methylthiolation of N6-(dimethylallyl)adenosine (i(6)A), leading to the formation of 2-methylthio-N6-(dimethylallyl)adenosine (ms(2)i(6)A) at position 37 in tRNAs that read codons beginning with uridine.</text>
</comment>
<comment type="catalytic activity">
    <reaction evidence="1">
        <text>N(6)-dimethylallyladenosine(37) in tRNA + (sulfur carrier)-SH + AH2 + 2 S-adenosyl-L-methionine = 2-methylsulfanyl-N(6)-dimethylallyladenosine(37) in tRNA + (sulfur carrier)-H + 5'-deoxyadenosine + L-methionine + A + S-adenosyl-L-homocysteine + 2 H(+)</text>
        <dbReference type="Rhea" id="RHEA:37067"/>
        <dbReference type="Rhea" id="RHEA-COMP:10375"/>
        <dbReference type="Rhea" id="RHEA-COMP:10376"/>
        <dbReference type="Rhea" id="RHEA-COMP:14737"/>
        <dbReference type="Rhea" id="RHEA-COMP:14739"/>
        <dbReference type="ChEBI" id="CHEBI:13193"/>
        <dbReference type="ChEBI" id="CHEBI:15378"/>
        <dbReference type="ChEBI" id="CHEBI:17319"/>
        <dbReference type="ChEBI" id="CHEBI:17499"/>
        <dbReference type="ChEBI" id="CHEBI:29917"/>
        <dbReference type="ChEBI" id="CHEBI:57844"/>
        <dbReference type="ChEBI" id="CHEBI:57856"/>
        <dbReference type="ChEBI" id="CHEBI:59789"/>
        <dbReference type="ChEBI" id="CHEBI:64428"/>
        <dbReference type="ChEBI" id="CHEBI:74415"/>
        <dbReference type="ChEBI" id="CHEBI:74417"/>
        <dbReference type="EC" id="2.8.4.3"/>
    </reaction>
</comment>
<comment type="cofactor">
    <cofactor evidence="1">
        <name>[4Fe-4S] cluster</name>
        <dbReference type="ChEBI" id="CHEBI:49883"/>
    </cofactor>
    <text evidence="1">Binds 2 [4Fe-4S] clusters. One cluster is coordinated with 3 cysteines and an exchangeable S-adenosyl-L-methionine.</text>
</comment>
<comment type="subunit">
    <text evidence="1">Monomer.</text>
</comment>
<comment type="subcellular location">
    <subcellularLocation>
        <location evidence="1">Cytoplasm</location>
    </subcellularLocation>
</comment>
<comment type="similarity">
    <text evidence="1">Belongs to the methylthiotransferase family. MiaB subfamily.</text>
</comment>
<sequence length="461" mass="51938">MMKSSNKSSGSLIRLDKKHIYIQTLGCQMNVHDSEQIAALMEEKGYICTEDANEADLIILNTCSIREKAAQKAKSQLGRYRNLKRKKRNLLIGVGGCLAQQLGDELLTKVPDIDFIFGTHNIHQLPDFISRIEKSRKKIVETTLHPSTPSIGVLALPCNGQVSSFVTIMQGCNNFCSYCIVPYVRGREESRPPEDIIHEIRMLADHGVKEVTLLGQNVNSYARKTSGEMGFAELLREIEKIKGIERMRFTTSHPKDLSEFLITAFSDLSKLCHHIHLPFQSGSDRILALMNRGYTKSDYLAKVERLRTVCPDISITADVIVGFPGESDEDFKETIDMMNQIRFDNLFSFKYSEREGTAAVKMDGKVSEPLKLERLQILQALQEQHTLEKNKAMEGKQEDVLVEGFSKNCRKDLTGRTSTNKIVNFSGCVDLIGDMVSVLIKEAYLHSLRGEMLCEEVVHAN</sequence>
<protein>
    <recommendedName>
        <fullName evidence="1">tRNA-2-methylthio-N(6)-dimethylallyladenosine synthase</fullName>
        <ecNumber evidence="1">2.8.4.3</ecNumber>
    </recommendedName>
    <alternativeName>
        <fullName evidence="1">(Dimethylallyl)adenosine tRNA methylthiotransferase MiaB</fullName>
    </alternativeName>
    <alternativeName>
        <fullName evidence="1">tRNA-i(6)A37 methylthiotransferase</fullName>
    </alternativeName>
</protein>